<evidence type="ECO:0000250" key="1"/>
<evidence type="ECO:0000269" key="2">
    <source>
    </source>
</evidence>
<evidence type="ECO:0000305" key="3"/>
<protein>
    <recommendedName>
        <fullName>F-box protein At3g62230</fullName>
    </recommendedName>
</protein>
<organism>
    <name type="scientific">Arabidopsis thaliana</name>
    <name type="common">Mouse-ear cress</name>
    <dbReference type="NCBI Taxonomy" id="3702"/>
    <lineage>
        <taxon>Eukaryota</taxon>
        <taxon>Viridiplantae</taxon>
        <taxon>Streptophyta</taxon>
        <taxon>Embryophyta</taxon>
        <taxon>Tracheophyta</taxon>
        <taxon>Spermatophyta</taxon>
        <taxon>Magnoliopsida</taxon>
        <taxon>eudicotyledons</taxon>
        <taxon>Gunneridae</taxon>
        <taxon>Pentapetalae</taxon>
        <taxon>rosids</taxon>
        <taxon>malvids</taxon>
        <taxon>Brassicales</taxon>
        <taxon>Brassicaceae</taxon>
        <taxon>Camelineae</taxon>
        <taxon>Arabidopsis</taxon>
    </lineage>
</organism>
<comment type="function">
    <text evidence="1">Component of SCF(ASK-cullin-F-box) E3 ubiquitin ligase complexes, which may mediate the ubiquitination and subsequent proteasomal degradation of target proteins.</text>
</comment>
<comment type="pathway">
    <text>Protein modification; protein ubiquitination.</text>
</comment>
<comment type="subunit">
    <text evidence="1 2">Part of a SCF (ASK-cullin-F-box) protein ligase complex (By similarity). Interacts with ASK4.</text>
</comment>
<comment type="subcellular location">
    <subcellularLocation>
        <location evidence="1">Nucleus</location>
    </subcellularLocation>
</comment>
<comment type="domain">
    <text evidence="1">The F-box is necessary for the interaction with ASK proteins.</text>
</comment>
<name>FB215_ARATH</name>
<gene>
    <name type="ordered locus">At3g62230</name>
    <name type="ORF">T17J13.190</name>
</gene>
<accession>Q9M1Q1</accession>
<accession>Q56ZK0</accession>
<keyword id="KW-0539">Nucleus</keyword>
<keyword id="KW-1185">Reference proteome</keyword>
<keyword id="KW-0833">Ubl conjugation pathway</keyword>
<proteinExistence type="evidence at protein level"/>
<dbReference type="EMBL" id="AL138651">
    <property type="protein sequence ID" value="CAB71883.1"/>
    <property type="molecule type" value="Genomic_DNA"/>
</dbReference>
<dbReference type="EMBL" id="CP002686">
    <property type="protein sequence ID" value="AEE80325.1"/>
    <property type="molecule type" value="Genomic_DNA"/>
</dbReference>
<dbReference type="EMBL" id="AK118317">
    <property type="protein sequence ID" value="BAC42933.1"/>
    <property type="molecule type" value="mRNA"/>
</dbReference>
<dbReference type="EMBL" id="BT005694">
    <property type="protein sequence ID" value="AAO64114.1"/>
    <property type="molecule type" value="mRNA"/>
</dbReference>
<dbReference type="EMBL" id="AK220964">
    <property type="protein sequence ID" value="BAD94518.1"/>
    <property type="molecule type" value="mRNA"/>
</dbReference>
<dbReference type="PIR" id="T48015">
    <property type="entry name" value="T48015"/>
</dbReference>
<dbReference type="BioGRID" id="10710">
    <property type="interactions" value="2"/>
</dbReference>
<dbReference type="FunCoup" id="Q9M1Q1">
    <property type="interactions" value="118"/>
</dbReference>
<dbReference type="IntAct" id="Q9M1Q1">
    <property type="interactions" value="1"/>
</dbReference>
<dbReference type="STRING" id="3702.Q9M1Q1"/>
<dbReference type="PaxDb" id="3702-AT3G62230.1"/>
<dbReference type="ProteomicsDB" id="230729"/>
<dbReference type="EnsemblPlants" id="AT3G62230.1">
    <property type="protein sequence ID" value="AT3G62230.1"/>
    <property type="gene ID" value="AT3G62230"/>
</dbReference>
<dbReference type="Gramene" id="AT3G62230.1">
    <property type="protein sequence ID" value="AT3G62230.1"/>
    <property type="gene ID" value="AT3G62230"/>
</dbReference>
<dbReference type="KEGG" id="ath:AT3G62230"/>
<dbReference type="Araport" id="AT3G62230"/>
<dbReference type="TAIR" id="AT3G62230">
    <property type="gene designation" value="DAF1"/>
</dbReference>
<dbReference type="eggNOG" id="ENOG502QVFC">
    <property type="taxonomic scope" value="Eukaryota"/>
</dbReference>
<dbReference type="HOGENOM" id="CLU_045042_0_0_1"/>
<dbReference type="InParanoid" id="Q9M1Q1"/>
<dbReference type="OMA" id="FEAEIKH"/>
<dbReference type="PhylomeDB" id="Q9M1Q1"/>
<dbReference type="UniPathway" id="UPA00143"/>
<dbReference type="PRO" id="PR:Q9M1Q1"/>
<dbReference type="Proteomes" id="UP000006548">
    <property type="component" value="Chromosome 3"/>
</dbReference>
<dbReference type="ExpressionAtlas" id="Q9M1Q1">
    <property type="expression patterns" value="baseline and differential"/>
</dbReference>
<dbReference type="GO" id="GO:0005634">
    <property type="term" value="C:nucleus"/>
    <property type="evidence" value="ECO:0007669"/>
    <property type="project" value="UniProtKB-SubCell"/>
</dbReference>
<dbReference type="GO" id="GO:0048235">
    <property type="term" value="P:pollen sperm cell differentiation"/>
    <property type="evidence" value="ECO:0000270"/>
    <property type="project" value="TAIR"/>
</dbReference>
<dbReference type="GO" id="GO:0016567">
    <property type="term" value="P:protein ubiquitination"/>
    <property type="evidence" value="ECO:0007669"/>
    <property type="project" value="UniProtKB-UniPathway"/>
</dbReference>
<dbReference type="Gene3D" id="1.20.1280.50">
    <property type="match status" value="1"/>
</dbReference>
<dbReference type="InterPro" id="IPR036047">
    <property type="entry name" value="F-box-like_dom_sf"/>
</dbReference>
<dbReference type="InterPro" id="IPR001810">
    <property type="entry name" value="F-box_dom"/>
</dbReference>
<dbReference type="InterPro" id="IPR050232">
    <property type="entry name" value="FBL13/AtMIF1-like"/>
</dbReference>
<dbReference type="PANTHER" id="PTHR31900">
    <property type="entry name" value="F-BOX/RNI SUPERFAMILY PROTEIN-RELATED"/>
    <property type="match status" value="1"/>
</dbReference>
<dbReference type="PANTHER" id="PTHR31900:SF30">
    <property type="entry name" value="SUPERFAMILY PROTEIN, PUTATIVE-RELATED"/>
    <property type="match status" value="1"/>
</dbReference>
<dbReference type="Pfam" id="PF00646">
    <property type="entry name" value="F-box"/>
    <property type="match status" value="1"/>
</dbReference>
<dbReference type="SUPFAM" id="SSF81383">
    <property type="entry name" value="F-box domain"/>
    <property type="match status" value="1"/>
</dbReference>
<dbReference type="SUPFAM" id="SSF52047">
    <property type="entry name" value="RNI-like"/>
    <property type="match status" value="1"/>
</dbReference>
<reference key="1">
    <citation type="journal article" date="2000" name="Nature">
        <title>Sequence and analysis of chromosome 3 of the plant Arabidopsis thaliana.</title>
        <authorList>
            <person name="Salanoubat M."/>
            <person name="Lemcke K."/>
            <person name="Rieger M."/>
            <person name="Ansorge W."/>
            <person name="Unseld M."/>
            <person name="Fartmann B."/>
            <person name="Valle G."/>
            <person name="Bloecker H."/>
            <person name="Perez-Alonso M."/>
            <person name="Obermaier B."/>
            <person name="Delseny M."/>
            <person name="Boutry M."/>
            <person name="Grivell L.A."/>
            <person name="Mache R."/>
            <person name="Puigdomenech P."/>
            <person name="De Simone V."/>
            <person name="Choisne N."/>
            <person name="Artiguenave F."/>
            <person name="Robert C."/>
            <person name="Brottier P."/>
            <person name="Wincker P."/>
            <person name="Cattolico L."/>
            <person name="Weissenbach J."/>
            <person name="Saurin W."/>
            <person name="Quetier F."/>
            <person name="Schaefer M."/>
            <person name="Mueller-Auer S."/>
            <person name="Gabel C."/>
            <person name="Fuchs M."/>
            <person name="Benes V."/>
            <person name="Wurmbach E."/>
            <person name="Drzonek H."/>
            <person name="Erfle H."/>
            <person name="Jordan N."/>
            <person name="Bangert S."/>
            <person name="Wiedelmann R."/>
            <person name="Kranz H."/>
            <person name="Voss H."/>
            <person name="Holland R."/>
            <person name="Brandt P."/>
            <person name="Nyakatura G."/>
            <person name="Vezzi A."/>
            <person name="D'Angelo M."/>
            <person name="Pallavicini A."/>
            <person name="Toppo S."/>
            <person name="Simionati B."/>
            <person name="Conrad A."/>
            <person name="Hornischer K."/>
            <person name="Kauer G."/>
            <person name="Loehnert T.-H."/>
            <person name="Nordsiek G."/>
            <person name="Reichelt J."/>
            <person name="Scharfe M."/>
            <person name="Schoen O."/>
            <person name="Bargues M."/>
            <person name="Terol J."/>
            <person name="Climent J."/>
            <person name="Navarro P."/>
            <person name="Collado C."/>
            <person name="Perez-Perez A."/>
            <person name="Ottenwaelder B."/>
            <person name="Duchemin D."/>
            <person name="Cooke R."/>
            <person name="Laudie M."/>
            <person name="Berger-Llauro C."/>
            <person name="Purnelle B."/>
            <person name="Masuy D."/>
            <person name="de Haan M."/>
            <person name="Maarse A.C."/>
            <person name="Alcaraz J.-P."/>
            <person name="Cottet A."/>
            <person name="Casacuberta E."/>
            <person name="Monfort A."/>
            <person name="Argiriou A."/>
            <person name="Flores M."/>
            <person name="Liguori R."/>
            <person name="Vitale D."/>
            <person name="Mannhaupt G."/>
            <person name="Haase D."/>
            <person name="Schoof H."/>
            <person name="Rudd S."/>
            <person name="Zaccaria P."/>
            <person name="Mewes H.-W."/>
            <person name="Mayer K.F.X."/>
            <person name="Kaul S."/>
            <person name="Town C.D."/>
            <person name="Koo H.L."/>
            <person name="Tallon L.J."/>
            <person name="Jenkins J."/>
            <person name="Rooney T."/>
            <person name="Rizzo M."/>
            <person name="Walts A."/>
            <person name="Utterback T."/>
            <person name="Fujii C.Y."/>
            <person name="Shea T.P."/>
            <person name="Creasy T.H."/>
            <person name="Haas B."/>
            <person name="Maiti R."/>
            <person name="Wu D."/>
            <person name="Peterson J."/>
            <person name="Van Aken S."/>
            <person name="Pai G."/>
            <person name="Militscher J."/>
            <person name="Sellers P."/>
            <person name="Gill J.E."/>
            <person name="Feldblyum T.V."/>
            <person name="Preuss D."/>
            <person name="Lin X."/>
            <person name="Nierman W.C."/>
            <person name="Salzberg S.L."/>
            <person name="White O."/>
            <person name="Venter J.C."/>
            <person name="Fraser C.M."/>
            <person name="Kaneko T."/>
            <person name="Nakamura Y."/>
            <person name="Sato S."/>
            <person name="Kato T."/>
            <person name="Asamizu E."/>
            <person name="Sasamoto S."/>
            <person name="Kimura T."/>
            <person name="Idesawa K."/>
            <person name="Kawashima K."/>
            <person name="Kishida Y."/>
            <person name="Kiyokawa C."/>
            <person name="Kohara M."/>
            <person name="Matsumoto M."/>
            <person name="Matsuno A."/>
            <person name="Muraki A."/>
            <person name="Nakayama S."/>
            <person name="Nakazaki N."/>
            <person name="Shinpo S."/>
            <person name="Takeuchi C."/>
            <person name="Wada T."/>
            <person name="Watanabe A."/>
            <person name="Yamada M."/>
            <person name="Yasuda M."/>
            <person name="Tabata S."/>
        </authorList>
    </citation>
    <scope>NUCLEOTIDE SEQUENCE [LARGE SCALE GENOMIC DNA]</scope>
    <source>
        <strain>cv. Columbia</strain>
    </source>
</reference>
<reference key="2">
    <citation type="journal article" date="2017" name="Plant J.">
        <title>Araport11: a complete reannotation of the Arabidopsis thaliana reference genome.</title>
        <authorList>
            <person name="Cheng C.Y."/>
            <person name="Krishnakumar V."/>
            <person name="Chan A.P."/>
            <person name="Thibaud-Nissen F."/>
            <person name="Schobel S."/>
            <person name="Town C.D."/>
        </authorList>
    </citation>
    <scope>GENOME REANNOTATION</scope>
    <source>
        <strain>cv. Columbia</strain>
    </source>
</reference>
<reference key="3">
    <citation type="journal article" date="2002" name="Science">
        <title>Functional annotation of a full-length Arabidopsis cDNA collection.</title>
        <authorList>
            <person name="Seki M."/>
            <person name="Narusaka M."/>
            <person name="Kamiya A."/>
            <person name="Ishida J."/>
            <person name="Satou M."/>
            <person name="Sakurai T."/>
            <person name="Nakajima M."/>
            <person name="Enju A."/>
            <person name="Akiyama K."/>
            <person name="Oono Y."/>
            <person name="Muramatsu M."/>
            <person name="Hayashizaki Y."/>
            <person name="Kawai J."/>
            <person name="Carninci P."/>
            <person name="Itoh M."/>
            <person name="Ishii Y."/>
            <person name="Arakawa T."/>
            <person name="Shibata K."/>
            <person name="Shinagawa A."/>
            <person name="Shinozaki K."/>
        </authorList>
    </citation>
    <scope>NUCLEOTIDE SEQUENCE [LARGE SCALE MRNA]</scope>
    <source>
        <strain>cv. Columbia</strain>
    </source>
</reference>
<reference key="4">
    <citation type="journal article" date="2003" name="Science">
        <title>Empirical analysis of transcriptional activity in the Arabidopsis genome.</title>
        <authorList>
            <person name="Yamada K."/>
            <person name="Lim J."/>
            <person name="Dale J.M."/>
            <person name="Chen H."/>
            <person name="Shinn P."/>
            <person name="Palm C.J."/>
            <person name="Southwick A.M."/>
            <person name="Wu H.C."/>
            <person name="Kim C.J."/>
            <person name="Nguyen M."/>
            <person name="Pham P.K."/>
            <person name="Cheuk R.F."/>
            <person name="Karlin-Newmann G."/>
            <person name="Liu S.X."/>
            <person name="Lam B."/>
            <person name="Sakano H."/>
            <person name="Wu T."/>
            <person name="Yu G."/>
            <person name="Miranda M."/>
            <person name="Quach H.L."/>
            <person name="Tripp M."/>
            <person name="Chang C.H."/>
            <person name="Lee J.M."/>
            <person name="Toriumi M.J."/>
            <person name="Chan M.M."/>
            <person name="Tang C.C."/>
            <person name="Onodera C.S."/>
            <person name="Deng J.M."/>
            <person name="Akiyama K."/>
            <person name="Ansari Y."/>
            <person name="Arakawa T."/>
            <person name="Banh J."/>
            <person name="Banno F."/>
            <person name="Bowser L."/>
            <person name="Brooks S.Y."/>
            <person name="Carninci P."/>
            <person name="Chao Q."/>
            <person name="Choy N."/>
            <person name="Enju A."/>
            <person name="Goldsmith A.D."/>
            <person name="Gurjal M."/>
            <person name="Hansen N.F."/>
            <person name="Hayashizaki Y."/>
            <person name="Johnson-Hopson C."/>
            <person name="Hsuan V.W."/>
            <person name="Iida K."/>
            <person name="Karnes M."/>
            <person name="Khan S."/>
            <person name="Koesema E."/>
            <person name="Ishida J."/>
            <person name="Jiang P.X."/>
            <person name="Jones T."/>
            <person name="Kawai J."/>
            <person name="Kamiya A."/>
            <person name="Meyers C."/>
            <person name="Nakajima M."/>
            <person name="Narusaka M."/>
            <person name="Seki M."/>
            <person name="Sakurai T."/>
            <person name="Satou M."/>
            <person name="Tamse R."/>
            <person name="Vaysberg M."/>
            <person name="Wallender E.K."/>
            <person name="Wong C."/>
            <person name="Yamamura Y."/>
            <person name="Yuan S."/>
            <person name="Shinozaki K."/>
            <person name="Davis R.W."/>
            <person name="Theologis A."/>
            <person name="Ecker J.R."/>
        </authorList>
    </citation>
    <scope>NUCLEOTIDE SEQUENCE [LARGE SCALE MRNA]</scope>
    <source>
        <strain>cv. Columbia</strain>
    </source>
</reference>
<reference key="5">
    <citation type="submission" date="2005-03" db="EMBL/GenBank/DDBJ databases">
        <title>Large-scale analysis of RIKEN Arabidopsis full-length (RAFL) cDNAs.</title>
        <authorList>
            <person name="Totoki Y."/>
            <person name="Seki M."/>
            <person name="Ishida J."/>
            <person name="Nakajima M."/>
            <person name="Enju A."/>
            <person name="Kamiya A."/>
            <person name="Narusaka M."/>
            <person name="Shin-i T."/>
            <person name="Nakagawa M."/>
            <person name="Sakamoto N."/>
            <person name="Oishi K."/>
            <person name="Kohara Y."/>
            <person name="Kobayashi M."/>
            <person name="Toyoda A."/>
            <person name="Sakaki Y."/>
            <person name="Sakurai T."/>
            <person name="Iida K."/>
            <person name="Akiyama K."/>
            <person name="Satou M."/>
            <person name="Toyoda T."/>
            <person name="Konagaya A."/>
            <person name="Carninci P."/>
            <person name="Kawai J."/>
            <person name="Hayashizaki Y."/>
            <person name="Shinozaki K."/>
        </authorList>
    </citation>
    <scope>NUCLEOTIDE SEQUENCE [LARGE SCALE MRNA] OF 369-461</scope>
    <source>
        <strain>cv. Columbia</strain>
    </source>
</reference>
<reference key="6">
    <citation type="journal article" date="2002" name="Proc. Natl. Acad. Sci. U.S.A.">
        <title>The F-box subunit of the SCF E3 complex is encoded by a diverse superfamily of genes in Arabidopsis.</title>
        <authorList>
            <person name="Gagne J.M."/>
            <person name="Downes B.P."/>
            <person name="Shiu S.-H."/>
            <person name="Durski A.M."/>
            <person name="Vierstra R.D."/>
        </authorList>
    </citation>
    <scope>INTERACTION WITH ASK4</scope>
</reference>
<feature type="chain" id="PRO_0000283484" description="F-box protein At3g62230">
    <location>
        <begin position="1"/>
        <end position="461"/>
    </location>
</feature>
<feature type="domain" description="F-box">
    <location>
        <begin position="7"/>
        <end position="55"/>
    </location>
</feature>
<feature type="sequence conflict" description="In Ref. 5; BAD94518." evidence="3" ref="5">
    <original>M</original>
    <variation>I</variation>
    <location>
        <position position="369"/>
    </location>
</feature>
<sequence>MDSGSAVDIISTLSDFLLVLIISNLSFKEALSTSRLSTRWRHICRETRNISFREDEIVTFADDSVARYYQRAALVAYMVGWVNNFTGGVVESFELRLSNSYAFEEGVTTLIEFAVSKNVKHLFLDLSEPRWVTNNDAAQLEPGLIKLPESFYKITSLVTLKLFGCRFEPSRLAKPGMVKTMFFRWIRLEMLSALIAKTPLLEILNIKNCWEIGLDAITGYNDRLMKLVFKYCSFSAQQTTLDVPNIQIFKYFGKVYRFEFASANKLMEEAYLDYREESRYNVSAGAIISGFLYSMLSAKTFTICPYVLQLIQECEDPVRLKAPMETRQLVLKTNFEPNEFVGIRFMLNSSPYLETLSFQMVGPRPIEEMVPQIDPEAYWGQNTSHECLKKTLKKVEVWSFYGGTHELRVLEYLIRYGRMLERVDLYQPIGLDDIQLLPIRAAADRVGEFEARSENLVVTFY</sequence>